<sequence>MSFVLILSLVFGGCCSNVISFEHMVQGSNINLGNIVTFTQFVSVTLIQLPNALDFSHFPFRLRPRHIPLKIHMLAVFLFFTSSVANNSVFKFDISVPIHIIIRCSGTTLTMIIGWAVCNKRYSKLQVQSAIIMTLGAIVASLYRDKEFSMDSLKLNTDSVGMTQKSMFGIFVVLVATALMSLLSLLNEWTYNKCGKHWKETLFYSHFLALPLFMLGYTRLRDEFRDLLISSDSMDIPIVKLPIATKLFMLIANNVTQFICIKGVNMLASNTDALTLSVVLLVRKFVSLLLSVYIYKNVLSVTAYLGTITVFLGAGLYSYGSVKTALPR</sequence>
<dbReference type="EMBL" id="AF106080">
    <property type="protein sequence ID" value="AAC49313.1"/>
    <property type="molecule type" value="Genomic_DNA"/>
</dbReference>
<dbReference type="EMBL" id="CR382122">
    <property type="protein sequence ID" value="CAH02066.1"/>
    <property type="molecule type" value="Genomic_DNA"/>
</dbReference>
<dbReference type="RefSeq" id="XP_451673.1">
    <property type="nucleotide sequence ID" value="XM_451673.1"/>
</dbReference>
<dbReference type="SMR" id="Q00974"/>
<dbReference type="FunCoup" id="Q00974">
    <property type="interactions" value="170"/>
</dbReference>
<dbReference type="STRING" id="284590.Q00974"/>
<dbReference type="TCDB" id="2.A.7.10.1">
    <property type="family name" value="the drug/metabolite transporter (dmt) superfamily"/>
</dbReference>
<dbReference type="PaxDb" id="284590-Q00974"/>
<dbReference type="KEGG" id="kla:KLLA0_B03157g"/>
<dbReference type="eggNOG" id="KOG1583">
    <property type="taxonomic scope" value="Eukaryota"/>
</dbReference>
<dbReference type="HOGENOM" id="CLU_033007_1_1_1"/>
<dbReference type="InParanoid" id="Q00974"/>
<dbReference type="OMA" id="NPFTGWH"/>
<dbReference type="Proteomes" id="UP000000598">
    <property type="component" value="Chromosome B"/>
</dbReference>
<dbReference type="GO" id="GO:0005789">
    <property type="term" value="C:endoplasmic reticulum membrane"/>
    <property type="evidence" value="ECO:0007669"/>
    <property type="project" value="TreeGrafter"/>
</dbReference>
<dbReference type="GO" id="GO:0000139">
    <property type="term" value="C:Golgi membrane"/>
    <property type="evidence" value="ECO:0007669"/>
    <property type="project" value="UniProtKB-SubCell"/>
</dbReference>
<dbReference type="GO" id="GO:0005462">
    <property type="term" value="F:UDP-N-acetylglucosamine transmembrane transporter activity"/>
    <property type="evidence" value="ECO:0007669"/>
    <property type="project" value="TreeGrafter"/>
</dbReference>
<dbReference type="GO" id="GO:0005464">
    <property type="term" value="F:UDP-xylose transmembrane transporter activity"/>
    <property type="evidence" value="ECO:0007669"/>
    <property type="project" value="TreeGrafter"/>
</dbReference>
<dbReference type="InterPro" id="IPR013657">
    <property type="entry name" value="SCL35B1-4/HUT1"/>
</dbReference>
<dbReference type="NCBIfam" id="TIGR00803">
    <property type="entry name" value="nst"/>
    <property type="match status" value="1"/>
</dbReference>
<dbReference type="PANTHER" id="PTHR10778:SF4">
    <property type="entry name" value="NUCLEOTIDE SUGAR TRANSPORTER SLC35B4"/>
    <property type="match status" value="1"/>
</dbReference>
<dbReference type="PANTHER" id="PTHR10778">
    <property type="entry name" value="SOLUTE CARRIER FAMILY 35 MEMBER B"/>
    <property type="match status" value="1"/>
</dbReference>
<dbReference type="Pfam" id="PF08449">
    <property type="entry name" value="UAA"/>
    <property type="match status" value="1"/>
</dbReference>
<proteinExistence type="inferred from homology"/>
<evidence type="ECO:0000255" key="1"/>
<evidence type="ECO:0000269" key="2">
    <source>
    </source>
</evidence>
<evidence type="ECO:0000305" key="3"/>
<organism>
    <name type="scientific">Kluyveromyces lactis (strain ATCC 8585 / CBS 2359 / DSM 70799 / NBRC 1267 / NRRL Y-1140 / WM37)</name>
    <name type="common">Yeast</name>
    <name type="synonym">Candida sphaerica</name>
    <dbReference type="NCBI Taxonomy" id="284590"/>
    <lineage>
        <taxon>Eukaryota</taxon>
        <taxon>Fungi</taxon>
        <taxon>Dikarya</taxon>
        <taxon>Ascomycota</taxon>
        <taxon>Saccharomycotina</taxon>
        <taxon>Saccharomycetes</taxon>
        <taxon>Saccharomycetales</taxon>
        <taxon>Saccharomycetaceae</taxon>
        <taxon>Kluyveromyces</taxon>
    </lineage>
</organism>
<reference key="1">
    <citation type="journal article" date="1996" name="Proc. Natl. Acad. Sci. U.S.A.">
        <title>Molecular cloning of the Golgi apparatus uridine diphosphate-N-acetylglucosamine transporter from Kluyveromyces lactis.</title>
        <authorList>
            <person name="Abeijon C."/>
            <person name="Robbins P.W."/>
            <person name="Hirschberg C.B."/>
        </authorList>
    </citation>
    <scope>NUCLEOTIDE SEQUENCE [GENOMIC DNA]</scope>
    <scope>FUNCTION</scope>
    <source>
        <strain>ATCC 201343 / MG1/2</strain>
    </source>
</reference>
<reference key="2">
    <citation type="journal article" date="2004" name="Nature">
        <title>Genome evolution in yeasts.</title>
        <authorList>
            <person name="Dujon B."/>
            <person name="Sherman D."/>
            <person name="Fischer G."/>
            <person name="Durrens P."/>
            <person name="Casaregola S."/>
            <person name="Lafontaine I."/>
            <person name="de Montigny J."/>
            <person name="Marck C."/>
            <person name="Neuveglise C."/>
            <person name="Talla E."/>
            <person name="Goffard N."/>
            <person name="Frangeul L."/>
            <person name="Aigle M."/>
            <person name="Anthouard V."/>
            <person name="Babour A."/>
            <person name="Barbe V."/>
            <person name="Barnay S."/>
            <person name="Blanchin S."/>
            <person name="Beckerich J.-M."/>
            <person name="Beyne E."/>
            <person name="Bleykasten C."/>
            <person name="Boisrame A."/>
            <person name="Boyer J."/>
            <person name="Cattolico L."/>
            <person name="Confanioleri F."/>
            <person name="de Daruvar A."/>
            <person name="Despons L."/>
            <person name="Fabre E."/>
            <person name="Fairhead C."/>
            <person name="Ferry-Dumazet H."/>
            <person name="Groppi A."/>
            <person name="Hantraye F."/>
            <person name="Hennequin C."/>
            <person name="Jauniaux N."/>
            <person name="Joyet P."/>
            <person name="Kachouri R."/>
            <person name="Kerrest A."/>
            <person name="Koszul R."/>
            <person name="Lemaire M."/>
            <person name="Lesur I."/>
            <person name="Ma L."/>
            <person name="Muller H."/>
            <person name="Nicaud J.-M."/>
            <person name="Nikolski M."/>
            <person name="Oztas S."/>
            <person name="Ozier-Kalogeropoulos O."/>
            <person name="Pellenz S."/>
            <person name="Potier S."/>
            <person name="Richard G.-F."/>
            <person name="Straub M.-L."/>
            <person name="Suleau A."/>
            <person name="Swennen D."/>
            <person name="Tekaia F."/>
            <person name="Wesolowski-Louvel M."/>
            <person name="Westhof E."/>
            <person name="Wirth B."/>
            <person name="Zeniou-Meyer M."/>
            <person name="Zivanovic Y."/>
            <person name="Bolotin-Fukuhara M."/>
            <person name="Thierry A."/>
            <person name="Bouchier C."/>
            <person name="Caudron B."/>
            <person name="Scarpelli C."/>
            <person name="Gaillardin C."/>
            <person name="Weissenbach J."/>
            <person name="Wincker P."/>
            <person name="Souciet J.-L."/>
        </authorList>
    </citation>
    <scope>NUCLEOTIDE SEQUENCE [LARGE SCALE GENOMIC DNA]</scope>
    <source>
        <strain>ATCC 8585 / CBS 2359 / DSM 70799 / NBRC 1267 / NRRL Y-1140 / WM37</strain>
    </source>
</reference>
<accession>Q00974</accession>
<feature type="chain" id="PRO_0000213360" description="UDP-N-acetylglucosamine transporter YEA4">
    <location>
        <begin position="1"/>
        <end position="328"/>
    </location>
</feature>
<feature type="transmembrane region" description="Helical" evidence="1">
    <location>
        <begin position="1"/>
        <end position="21"/>
    </location>
</feature>
<feature type="transmembrane region" description="Helical" evidence="1">
    <location>
        <begin position="30"/>
        <end position="50"/>
    </location>
</feature>
<feature type="transmembrane region" description="Helical" evidence="1">
    <location>
        <begin position="66"/>
        <end position="86"/>
    </location>
</feature>
<feature type="transmembrane region" description="Helical" evidence="1">
    <location>
        <begin position="98"/>
        <end position="118"/>
    </location>
</feature>
<feature type="transmembrane region" description="Helical" evidence="1">
    <location>
        <begin position="122"/>
        <end position="142"/>
    </location>
</feature>
<feature type="transmembrane region" description="Helical" evidence="1">
    <location>
        <begin position="166"/>
        <end position="186"/>
    </location>
</feature>
<feature type="transmembrane region" description="Helical" evidence="1">
    <location>
        <begin position="198"/>
        <end position="218"/>
    </location>
</feature>
<feature type="transmembrane region" description="Helical" evidence="1">
    <location>
        <begin position="241"/>
        <end position="261"/>
    </location>
</feature>
<feature type="transmembrane region" description="Helical" evidence="1">
    <location>
        <begin position="274"/>
        <end position="294"/>
    </location>
</feature>
<feature type="transmembrane region" description="Helical" evidence="1">
    <location>
        <begin position="298"/>
        <end position="318"/>
    </location>
</feature>
<gene>
    <name type="primary">YEA4</name>
    <name type="synonym">MNN2</name>
    <name type="ordered locus">KLLA0B03157g</name>
</gene>
<comment type="function">
    <text evidence="2">Sugar transporter that specifically mediates the transport of UDP-N-acetylglucosamine (UDP-GlcNAc) from the cytosol into Golgi vesicles where glycosyltransferases function.</text>
</comment>
<comment type="subcellular location">
    <subcellularLocation>
        <location>Golgi apparatus membrane</location>
        <topology>Multi-pass membrane protein</topology>
    </subcellularLocation>
</comment>
<comment type="similarity">
    <text evidence="3">Belongs to the nucleotide-sugar transporter family. SLC35A subfamily.</text>
</comment>
<protein>
    <recommendedName>
        <fullName>UDP-N-acetylglucosamine transporter YEA4</fullName>
    </recommendedName>
    <alternativeName>
        <fullName>Golgi UDP-GlcNAc transporter</fullName>
    </alternativeName>
</protein>
<keyword id="KW-0333">Golgi apparatus</keyword>
<keyword id="KW-0472">Membrane</keyword>
<keyword id="KW-1185">Reference proteome</keyword>
<keyword id="KW-0762">Sugar transport</keyword>
<keyword id="KW-0812">Transmembrane</keyword>
<keyword id="KW-1133">Transmembrane helix</keyword>
<keyword id="KW-0813">Transport</keyword>
<name>YEA4_KLULA</name>